<keyword id="KW-1185">Reference proteome</keyword>
<keyword id="KW-0687">Ribonucleoprotein</keyword>
<keyword id="KW-0689">Ribosomal protein</keyword>
<name>RL28_DESRM</name>
<sequence length="62" mass="6945">MAKCAICEKGVTVGIKLSHSHIRTKRTWNPNLQRVKAIVDGSPKRIMVCTRCLRSGKVQRAI</sequence>
<evidence type="ECO:0000255" key="1">
    <source>
        <dbReference type="HAMAP-Rule" id="MF_00373"/>
    </source>
</evidence>
<evidence type="ECO:0000305" key="2"/>
<gene>
    <name evidence="1" type="primary">rpmB</name>
    <name type="ordered locus">Dred_2089</name>
</gene>
<accession>A4J6A3</accession>
<dbReference type="EMBL" id="CP000612">
    <property type="protein sequence ID" value="ABO50606.1"/>
    <property type="molecule type" value="Genomic_DNA"/>
</dbReference>
<dbReference type="RefSeq" id="WP_011878412.1">
    <property type="nucleotide sequence ID" value="NC_009253.1"/>
</dbReference>
<dbReference type="SMR" id="A4J6A3"/>
<dbReference type="STRING" id="349161.Dred_2089"/>
<dbReference type="KEGG" id="drm:Dred_2089"/>
<dbReference type="eggNOG" id="COG0227">
    <property type="taxonomic scope" value="Bacteria"/>
</dbReference>
<dbReference type="HOGENOM" id="CLU_064548_7_0_9"/>
<dbReference type="OrthoDB" id="9805609at2"/>
<dbReference type="Proteomes" id="UP000001556">
    <property type="component" value="Chromosome"/>
</dbReference>
<dbReference type="GO" id="GO:1990904">
    <property type="term" value="C:ribonucleoprotein complex"/>
    <property type="evidence" value="ECO:0007669"/>
    <property type="project" value="UniProtKB-KW"/>
</dbReference>
<dbReference type="GO" id="GO:0005840">
    <property type="term" value="C:ribosome"/>
    <property type="evidence" value="ECO:0007669"/>
    <property type="project" value="UniProtKB-KW"/>
</dbReference>
<dbReference type="GO" id="GO:0003735">
    <property type="term" value="F:structural constituent of ribosome"/>
    <property type="evidence" value="ECO:0007669"/>
    <property type="project" value="InterPro"/>
</dbReference>
<dbReference type="GO" id="GO:0006412">
    <property type="term" value="P:translation"/>
    <property type="evidence" value="ECO:0007669"/>
    <property type="project" value="UniProtKB-UniRule"/>
</dbReference>
<dbReference type="FunFam" id="2.30.170.40:FF:000002">
    <property type="entry name" value="50S ribosomal protein L28"/>
    <property type="match status" value="1"/>
</dbReference>
<dbReference type="Gene3D" id="2.30.170.40">
    <property type="entry name" value="Ribosomal protein L28/L24"/>
    <property type="match status" value="1"/>
</dbReference>
<dbReference type="HAMAP" id="MF_00373">
    <property type="entry name" value="Ribosomal_bL28"/>
    <property type="match status" value="1"/>
</dbReference>
<dbReference type="InterPro" id="IPR050096">
    <property type="entry name" value="Bacterial_rp_bL28"/>
</dbReference>
<dbReference type="InterPro" id="IPR026569">
    <property type="entry name" value="Ribosomal_bL28"/>
</dbReference>
<dbReference type="InterPro" id="IPR034704">
    <property type="entry name" value="Ribosomal_bL28/bL31-like_sf"/>
</dbReference>
<dbReference type="InterPro" id="IPR001383">
    <property type="entry name" value="Ribosomal_bL28_bact-type"/>
</dbReference>
<dbReference type="InterPro" id="IPR037147">
    <property type="entry name" value="Ribosomal_bL28_sf"/>
</dbReference>
<dbReference type="NCBIfam" id="TIGR00009">
    <property type="entry name" value="L28"/>
    <property type="match status" value="1"/>
</dbReference>
<dbReference type="PANTHER" id="PTHR39080">
    <property type="entry name" value="50S RIBOSOMAL PROTEIN L28"/>
    <property type="match status" value="1"/>
</dbReference>
<dbReference type="PANTHER" id="PTHR39080:SF1">
    <property type="entry name" value="LARGE RIBOSOMAL SUBUNIT PROTEIN BL28A"/>
    <property type="match status" value="1"/>
</dbReference>
<dbReference type="Pfam" id="PF00830">
    <property type="entry name" value="Ribosomal_L28"/>
    <property type="match status" value="1"/>
</dbReference>
<dbReference type="SUPFAM" id="SSF143800">
    <property type="entry name" value="L28p-like"/>
    <property type="match status" value="1"/>
</dbReference>
<proteinExistence type="inferred from homology"/>
<comment type="similarity">
    <text evidence="1">Belongs to the bacterial ribosomal protein bL28 family.</text>
</comment>
<reference key="1">
    <citation type="submission" date="2007-03" db="EMBL/GenBank/DDBJ databases">
        <title>Complete sequence of Desulfotomaculum reducens MI-1.</title>
        <authorList>
            <consortium name="US DOE Joint Genome Institute"/>
            <person name="Copeland A."/>
            <person name="Lucas S."/>
            <person name="Lapidus A."/>
            <person name="Barry K."/>
            <person name="Detter J.C."/>
            <person name="Glavina del Rio T."/>
            <person name="Hammon N."/>
            <person name="Israni S."/>
            <person name="Dalin E."/>
            <person name="Tice H."/>
            <person name="Pitluck S."/>
            <person name="Sims D."/>
            <person name="Brettin T."/>
            <person name="Bruce D."/>
            <person name="Han C."/>
            <person name="Tapia R."/>
            <person name="Schmutz J."/>
            <person name="Larimer F."/>
            <person name="Land M."/>
            <person name="Hauser L."/>
            <person name="Kyrpides N."/>
            <person name="Kim E."/>
            <person name="Tebo B.M."/>
            <person name="Richardson P."/>
        </authorList>
    </citation>
    <scope>NUCLEOTIDE SEQUENCE [LARGE SCALE GENOMIC DNA]</scope>
    <source>
        <strain>ATCC BAA-1160 / DSM 100696 / MI-1</strain>
    </source>
</reference>
<organism>
    <name type="scientific">Desulforamulus reducens (strain ATCC BAA-1160 / DSM 100696 / MI-1)</name>
    <name type="common">Desulfotomaculum reducens</name>
    <dbReference type="NCBI Taxonomy" id="349161"/>
    <lineage>
        <taxon>Bacteria</taxon>
        <taxon>Bacillati</taxon>
        <taxon>Bacillota</taxon>
        <taxon>Clostridia</taxon>
        <taxon>Eubacteriales</taxon>
        <taxon>Peptococcaceae</taxon>
        <taxon>Desulforamulus</taxon>
    </lineage>
</organism>
<protein>
    <recommendedName>
        <fullName evidence="1">Large ribosomal subunit protein bL28</fullName>
    </recommendedName>
    <alternativeName>
        <fullName evidence="2">50S ribosomal protein L28</fullName>
    </alternativeName>
</protein>
<feature type="chain" id="PRO_1000072133" description="Large ribosomal subunit protein bL28">
    <location>
        <begin position="1"/>
        <end position="62"/>
    </location>
</feature>